<accession>Q5M0J9</accession>
<evidence type="ECO:0000255" key="1">
    <source>
        <dbReference type="HAMAP-Rule" id="MF_00745"/>
    </source>
</evidence>
<organism>
    <name type="scientific">Streptococcus thermophilus (strain CNRZ 1066)</name>
    <dbReference type="NCBI Taxonomy" id="299768"/>
    <lineage>
        <taxon>Bacteria</taxon>
        <taxon>Bacillati</taxon>
        <taxon>Bacillota</taxon>
        <taxon>Bacilli</taxon>
        <taxon>Lactobacillales</taxon>
        <taxon>Streptococcaceae</taxon>
        <taxon>Streptococcus</taxon>
    </lineage>
</organism>
<name>SPRTL_STRT1</name>
<proteinExistence type="inferred from homology"/>
<gene>
    <name type="ordered locus">str0664</name>
</gene>
<keyword id="KW-0963">Cytoplasm</keyword>
<keyword id="KW-0479">Metal-binding</keyword>
<keyword id="KW-0862">Zinc</keyword>
<sequence>MNLTDYVKTVSIEDFGWKFKHQALWNKRLRTTGGRFFPKDGHLDFNPKLYEEHGLETFRKIVRHELCHYHLYFQGKGCKHGDRDFKDLLARVDGLRYAPKMRNQAENYFLYQCQSCGHTYRRKRRVNTQKFGCGLCQGKLIFLNQS</sequence>
<feature type="chain" id="PRO_1000046522" description="Protein SprT-like">
    <location>
        <begin position="1"/>
        <end position="146"/>
    </location>
</feature>
<feature type="domain" description="SprT-like" evidence="1">
    <location>
        <begin position="6"/>
        <end position="141"/>
    </location>
</feature>
<feature type="active site" evidence="1">
    <location>
        <position position="65"/>
    </location>
</feature>
<feature type="binding site" evidence="1">
    <location>
        <position position="64"/>
    </location>
    <ligand>
        <name>Zn(2+)</name>
        <dbReference type="ChEBI" id="CHEBI:29105"/>
    </ligand>
</feature>
<feature type="binding site" evidence="1">
    <location>
        <position position="68"/>
    </location>
    <ligand>
        <name>Zn(2+)</name>
        <dbReference type="ChEBI" id="CHEBI:29105"/>
    </ligand>
</feature>
<comment type="cofactor">
    <cofactor evidence="1">
        <name>Zn(2+)</name>
        <dbReference type="ChEBI" id="CHEBI:29105"/>
    </cofactor>
    <text evidence="1">Binds 1 zinc ion.</text>
</comment>
<comment type="subcellular location">
    <subcellularLocation>
        <location evidence="1">Cytoplasm</location>
    </subcellularLocation>
</comment>
<comment type="similarity">
    <text evidence="1">Belongs to the SprT family.</text>
</comment>
<reference key="1">
    <citation type="journal article" date="2004" name="Nat. Biotechnol.">
        <title>Complete sequence and comparative genome analysis of the dairy bacterium Streptococcus thermophilus.</title>
        <authorList>
            <person name="Bolotin A."/>
            <person name="Quinquis B."/>
            <person name="Renault P."/>
            <person name="Sorokin A."/>
            <person name="Ehrlich S.D."/>
            <person name="Kulakauskas S."/>
            <person name="Lapidus A."/>
            <person name="Goltsman E."/>
            <person name="Mazur M."/>
            <person name="Pusch G.D."/>
            <person name="Fonstein M."/>
            <person name="Overbeek R."/>
            <person name="Kyprides N."/>
            <person name="Purnelle B."/>
            <person name="Prozzi D."/>
            <person name="Ngui K."/>
            <person name="Masuy D."/>
            <person name="Hancy F."/>
            <person name="Burteau S."/>
            <person name="Boutry M."/>
            <person name="Delcour J."/>
            <person name="Goffeau A."/>
            <person name="Hols P."/>
        </authorList>
    </citation>
    <scope>NUCLEOTIDE SEQUENCE [LARGE SCALE GENOMIC DNA]</scope>
    <source>
        <strain>CNRZ 1066</strain>
    </source>
</reference>
<protein>
    <recommendedName>
        <fullName evidence="1">Protein SprT-like</fullName>
    </recommendedName>
</protein>
<dbReference type="EMBL" id="CP000024">
    <property type="protein sequence ID" value="AAV62260.1"/>
    <property type="molecule type" value="Genomic_DNA"/>
</dbReference>
<dbReference type="RefSeq" id="WP_002946099.1">
    <property type="nucleotide sequence ID" value="NC_006449.1"/>
</dbReference>
<dbReference type="SMR" id="Q5M0J9"/>
<dbReference type="KEGG" id="stc:str0664"/>
<dbReference type="HOGENOM" id="CLU_123820_0_0_9"/>
<dbReference type="GO" id="GO:0005737">
    <property type="term" value="C:cytoplasm"/>
    <property type="evidence" value="ECO:0007669"/>
    <property type="project" value="UniProtKB-SubCell"/>
</dbReference>
<dbReference type="GO" id="GO:0008270">
    <property type="term" value="F:zinc ion binding"/>
    <property type="evidence" value="ECO:0007669"/>
    <property type="project" value="UniProtKB-UniRule"/>
</dbReference>
<dbReference type="GO" id="GO:0006950">
    <property type="term" value="P:response to stress"/>
    <property type="evidence" value="ECO:0007669"/>
    <property type="project" value="UniProtKB-ARBA"/>
</dbReference>
<dbReference type="HAMAP" id="MF_00745">
    <property type="entry name" value="SprT_like"/>
    <property type="match status" value="1"/>
</dbReference>
<dbReference type="InterPro" id="IPR006640">
    <property type="entry name" value="SprT-like_domain"/>
</dbReference>
<dbReference type="InterPro" id="IPR035240">
    <property type="entry name" value="SprT_Zn_ribbon"/>
</dbReference>
<dbReference type="InterPro" id="IPR023524">
    <property type="entry name" value="Uncharacterised_SprT-like"/>
</dbReference>
<dbReference type="NCBIfam" id="NF003339">
    <property type="entry name" value="PRK04351.1"/>
    <property type="match status" value="1"/>
</dbReference>
<dbReference type="Pfam" id="PF10263">
    <property type="entry name" value="SprT-like"/>
    <property type="match status" value="1"/>
</dbReference>
<dbReference type="Pfam" id="PF17283">
    <property type="entry name" value="Zn_ribbon_SprT"/>
    <property type="match status" value="1"/>
</dbReference>
<dbReference type="SMART" id="SM00731">
    <property type="entry name" value="SprT"/>
    <property type="match status" value="1"/>
</dbReference>